<dbReference type="EMBL" id="U43206">
    <property type="protein sequence ID" value="AAB06983.1"/>
    <property type="molecule type" value="mRNA"/>
</dbReference>
<dbReference type="EMBL" id="AF300422">
    <property type="protein sequence ID" value="AAG25635.1"/>
    <property type="molecule type" value="mRNA"/>
</dbReference>
<dbReference type="EMBL" id="AB046417">
    <property type="protein sequence ID" value="BAB03276.1"/>
    <property type="molecule type" value="mRNA"/>
</dbReference>
<dbReference type="EMBL" id="AK088212">
    <property type="protein sequence ID" value="BAC40214.1"/>
    <property type="molecule type" value="mRNA"/>
</dbReference>
<dbReference type="EMBL" id="BC008169">
    <property type="protein sequence ID" value="AAH08169.1"/>
    <property type="molecule type" value="mRNA"/>
</dbReference>
<dbReference type="EMBL" id="BC083063">
    <property type="protein sequence ID" value="AAH83063.1"/>
    <property type="molecule type" value="mRNA"/>
</dbReference>
<dbReference type="CCDS" id="CCDS39234.1"/>
<dbReference type="PIR" id="PN0043">
    <property type="entry name" value="PN0043"/>
</dbReference>
<dbReference type="RefSeq" id="NP_061346.2">
    <property type="nucleotide sequence ID" value="NM_018858.3"/>
</dbReference>
<dbReference type="PDB" id="6ENS">
    <property type="method" value="X-ray"/>
    <property type="resolution" value="1.30 A"/>
    <property type="chains" value="A=2-187"/>
</dbReference>
<dbReference type="PDBsum" id="6ENS"/>
<dbReference type="SMR" id="P70296"/>
<dbReference type="BioGRID" id="204834">
    <property type="interactions" value="17"/>
</dbReference>
<dbReference type="FunCoup" id="P70296">
    <property type="interactions" value="506"/>
</dbReference>
<dbReference type="IntAct" id="P70296">
    <property type="interactions" value="4"/>
</dbReference>
<dbReference type="STRING" id="10090.ENSMUSP00000048425"/>
<dbReference type="MEROPS" id="I51.002"/>
<dbReference type="GlyGen" id="P70296">
    <property type="glycosylation" value="1 site, 1 O-linked glycan (1 site)"/>
</dbReference>
<dbReference type="iPTMnet" id="P70296"/>
<dbReference type="PhosphoSitePlus" id="P70296"/>
<dbReference type="SwissPalm" id="P70296"/>
<dbReference type="REPRODUCTION-2DPAGE" id="P70296"/>
<dbReference type="CPTAC" id="non-CPTAC-3731"/>
<dbReference type="CPTAC" id="non-CPTAC-3995"/>
<dbReference type="jPOST" id="P70296"/>
<dbReference type="PaxDb" id="10090-ENSMUSP00000048425"/>
<dbReference type="PeptideAtlas" id="P70296"/>
<dbReference type="ProteomicsDB" id="287670"/>
<dbReference type="Pumba" id="P70296"/>
<dbReference type="TopDownProteomics" id="P70296"/>
<dbReference type="DNASU" id="23980"/>
<dbReference type="Ensembl" id="ENSMUST00000036951.13">
    <property type="protein sequence ID" value="ENSMUSP00000048425.7"/>
    <property type="gene ID" value="ENSMUSG00000032959.13"/>
</dbReference>
<dbReference type="GeneID" id="23980"/>
<dbReference type="KEGG" id="mmu:23980"/>
<dbReference type="UCSC" id="uc008zfl.1">
    <property type="organism name" value="mouse"/>
</dbReference>
<dbReference type="AGR" id="MGI:1344408"/>
<dbReference type="CTD" id="5037"/>
<dbReference type="MGI" id="MGI:1344408">
    <property type="gene designation" value="Pebp1"/>
</dbReference>
<dbReference type="VEuPathDB" id="HostDB:ENSMUSG00000032959"/>
<dbReference type="eggNOG" id="KOG3346">
    <property type="taxonomic scope" value="Eukaryota"/>
</dbReference>
<dbReference type="GeneTree" id="ENSGT00940000157251"/>
<dbReference type="InParanoid" id="P70296"/>
<dbReference type="OMA" id="QEVICYE"/>
<dbReference type="OrthoDB" id="206at9989"/>
<dbReference type="PhylomeDB" id="P70296"/>
<dbReference type="TreeFam" id="TF315074"/>
<dbReference type="Reactome" id="R-MMU-5674135">
    <property type="pathway name" value="MAP2K and MAPK activation"/>
</dbReference>
<dbReference type="Reactome" id="R-MMU-5675221">
    <property type="pathway name" value="Negative regulation of MAPK pathway"/>
</dbReference>
<dbReference type="BioGRID-ORCS" id="23980">
    <property type="hits" value="4 hits in 78 CRISPR screens"/>
</dbReference>
<dbReference type="ChiTaRS" id="Pebp1">
    <property type="organism name" value="mouse"/>
</dbReference>
<dbReference type="PRO" id="PR:P70296"/>
<dbReference type="Proteomes" id="UP000000589">
    <property type="component" value="Chromosome 5"/>
</dbReference>
<dbReference type="RNAct" id="P70296">
    <property type="molecule type" value="protein"/>
</dbReference>
<dbReference type="Bgee" id="ENSMUSG00000032959">
    <property type="expression patterns" value="Expressed in testis and 67 other cell types or tissues"/>
</dbReference>
<dbReference type="ExpressionAtlas" id="P70296">
    <property type="expression patterns" value="baseline and differential"/>
</dbReference>
<dbReference type="GO" id="GO:0009986">
    <property type="term" value="C:cell surface"/>
    <property type="evidence" value="ECO:0000314"/>
    <property type="project" value="MGI"/>
</dbReference>
<dbReference type="GO" id="GO:0005737">
    <property type="term" value="C:cytoplasm"/>
    <property type="evidence" value="ECO:0007669"/>
    <property type="project" value="UniProtKB-SubCell"/>
</dbReference>
<dbReference type="GO" id="GO:0043209">
    <property type="term" value="C:myelin sheath"/>
    <property type="evidence" value="ECO:0007005"/>
    <property type="project" value="UniProtKB"/>
</dbReference>
<dbReference type="GO" id="GO:0005524">
    <property type="term" value="F:ATP binding"/>
    <property type="evidence" value="ECO:0007669"/>
    <property type="project" value="UniProtKB-KW"/>
</dbReference>
<dbReference type="GO" id="GO:0008289">
    <property type="term" value="F:lipid binding"/>
    <property type="evidence" value="ECO:0007669"/>
    <property type="project" value="UniProtKB-KW"/>
</dbReference>
<dbReference type="GO" id="GO:0004867">
    <property type="term" value="F:serine-type endopeptidase inhibitor activity"/>
    <property type="evidence" value="ECO:0007669"/>
    <property type="project" value="UniProtKB-KW"/>
</dbReference>
<dbReference type="GO" id="GO:0048240">
    <property type="term" value="P:sperm capacitation"/>
    <property type="evidence" value="ECO:0000314"/>
    <property type="project" value="MGI"/>
</dbReference>
<dbReference type="CDD" id="cd00866">
    <property type="entry name" value="PEBP_euk"/>
    <property type="match status" value="1"/>
</dbReference>
<dbReference type="FunFam" id="3.90.280.10:FF:000003">
    <property type="entry name" value="phosphatidylethanolamine-binding protein 1"/>
    <property type="match status" value="1"/>
</dbReference>
<dbReference type="Gene3D" id="3.90.280.10">
    <property type="entry name" value="PEBP-like"/>
    <property type="match status" value="1"/>
</dbReference>
<dbReference type="InterPro" id="IPR008914">
    <property type="entry name" value="PEBP"/>
</dbReference>
<dbReference type="InterPro" id="IPR036610">
    <property type="entry name" value="PEBP-like_sf"/>
</dbReference>
<dbReference type="InterPro" id="IPR035810">
    <property type="entry name" value="PEBP_euk"/>
</dbReference>
<dbReference type="InterPro" id="IPR001858">
    <property type="entry name" value="Phosphatidylethanolamine-bd_CS"/>
</dbReference>
<dbReference type="PANTHER" id="PTHR11362">
    <property type="entry name" value="PHOSPHATIDYLETHANOLAMINE-BINDING PROTEIN"/>
    <property type="match status" value="1"/>
</dbReference>
<dbReference type="PANTHER" id="PTHR11362:SF151">
    <property type="entry name" value="PHOSPHATIDYLETHANOLAMINE-BINDING PROTEIN 1"/>
    <property type="match status" value="1"/>
</dbReference>
<dbReference type="Pfam" id="PF01161">
    <property type="entry name" value="PBP"/>
    <property type="match status" value="1"/>
</dbReference>
<dbReference type="SUPFAM" id="SSF49777">
    <property type="entry name" value="PEBP-like"/>
    <property type="match status" value="1"/>
</dbReference>
<dbReference type="PROSITE" id="PS01220">
    <property type="entry name" value="PBP"/>
    <property type="match status" value="1"/>
</dbReference>
<sequence>MAADISQWAGPLCLQEVDEPPQHALRVDYAGVTVDELGKVLTPTQVMNRPSSISWDGLDPGKLYTLVLTDPDAPSRKDPKFREWHHFLVVNMKGNDISSGTVLSDYVGSGPPSGTGLHRYVWLVYEQEQPLSCDEPILSNKSGDNRGKFKVETFRKKYNLGAPVAGTCYQAEWDDYVPKLYEQLSGK</sequence>
<evidence type="ECO:0000250" key="1"/>
<evidence type="ECO:0000250" key="2">
    <source>
        <dbReference type="UniProtKB" id="P30086"/>
    </source>
</evidence>
<evidence type="ECO:0000269" key="3">
    <source>
    </source>
</evidence>
<evidence type="ECO:0000305" key="4"/>
<evidence type="ECO:0007744" key="5">
    <source>
    </source>
</evidence>
<evidence type="ECO:0007829" key="6">
    <source>
        <dbReference type="PDB" id="6ENS"/>
    </source>
</evidence>
<accession>P70296</accession>
<accession>Q9D8G9</accession>
<accession>Q9JJ58</accession>
<proteinExistence type="evidence at protein level"/>
<keyword id="KW-0002">3D-structure</keyword>
<keyword id="KW-0007">Acetylation</keyword>
<keyword id="KW-0067">ATP-binding</keyword>
<keyword id="KW-0963">Cytoplasm</keyword>
<keyword id="KW-0903">Direct protein sequencing</keyword>
<keyword id="KW-1015">Disulfide bond</keyword>
<keyword id="KW-0446">Lipid-binding</keyword>
<keyword id="KW-0547">Nucleotide-binding</keyword>
<keyword id="KW-0597">Phosphoprotein</keyword>
<keyword id="KW-0646">Protease inhibitor</keyword>
<keyword id="KW-1185">Reference proteome</keyword>
<keyword id="KW-0722">Serine protease inhibitor</keyword>
<gene>
    <name type="primary">Pebp1</name>
    <name type="synonym">Pbp</name>
    <name type="synonym">Pebp</name>
</gene>
<organism>
    <name type="scientific">Mus musculus</name>
    <name type="common">Mouse</name>
    <dbReference type="NCBI Taxonomy" id="10090"/>
    <lineage>
        <taxon>Eukaryota</taxon>
        <taxon>Metazoa</taxon>
        <taxon>Chordata</taxon>
        <taxon>Craniata</taxon>
        <taxon>Vertebrata</taxon>
        <taxon>Euteleostomi</taxon>
        <taxon>Mammalia</taxon>
        <taxon>Eutheria</taxon>
        <taxon>Euarchontoglires</taxon>
        <taxon>Glires</taxon>
        <taxon>Rodentia</taxon>
        <taxon>Myomorpha</taxon>
        <taxon>Muroidea</taxon>
        <taxon>Muridae</taxon>
        <taxon>Murinae</taxon>
        <taxon>Mus</taxon>
        <taxon>Mus</taxon>
    </lineage>
</organism>
<comment type="function">
    <text evidence="1">Binds ATP, opioids and phosphatidylethanolamine. Has lower affinity for phosphatidylinositol and phosphatidylcholine. Serine protease inhibitor which inhibits thrombin, neuropsin and chymotrypsin but not trypsin, tissue type plasminogen activator and elastase. Inhibits the kinase activity of RAF1 by inhibiting its activation and by dissociating the RAF1/MEK complex and acting as a competitive inhibitor of MEK phosphorylation (By similarity).</text>
</comment>
<comment type="function">
    <text evidence="1">HCNP may be involved in the function of the presynaptic cholinergic neurons of the central nervous system. HCNP increases the production of choline acetyltransferase but not acetylcholinesterase. Seems to be mediated by a specific receptor (By similarity).</text>
</comment>
<comment type="subunit">
    <text evidence="1">Has a tendency to form dimers by disulfide cross-linking. Interacts with RAF1 and this interaction is enhanced if RAF1 is phosphorylated on residues 'Ser-338', 'Ser-339', 'Tyr-340' and 'Tyr-341'. Interacts with ALOX15; in response to IL13/interleukin-13, prevents the interaction of PEBP1 with RAF1 to activate the ERK signaling cascade (By similarity).</text>
</comment>
<comment type="subcellular location">
    <subcellularLocation>
        <location>Cytoplasm</location>
    </subcellularLocation>
</comment>
<comment type="tissue specificity">
    <text>HCNP is expressed in brain. Increased expression in aged senescence-accelerated mice.</text>
</comment>
<comment type="similarity">
    <text evidence="4">Belongs to the phosphatidylethanolamine-binding protein family.</text>
</comment>
<name>PEBP1_MOUSE</name>
<reference key="1">
    <citation type="submission" date="1996-09" db="EMBL/GenBank/DDBJ databases">
        <title>Cloning of mouse phosphatidylethanolamine binding protein gene.</title>
        <authorList>
            <person name="Lin B."/>
            <person name="Frischauf A.-M."/>
        </authorList>
    </citation>
    <scope>NUCLEOTIDE SEQUENCE [MRNA]</scope>
</reference>
<reference key="2">
    <citation type="journal article" date="1999" name="Neuroscience">
        <title>Increased expression of hippocampal cholinergic neurostimulating peptide-related components and their messenger RNAs in the hippocampus of aged senescence-accelerated mice.</title>
        <authorList>
            <person name="Matsukawa N."/>
            <person name="Tooyama I."/>
            <person name="Kimura H."/>
            <person name="Yamamoto T."/>
            <person name="Tsugu Y."/>
            <person name="Oomura Y."/>
            <person name="Ojika K."/>
        </authorList>
    </citation>
    <scope>NUCLEOTIDE SEQUENCE [MRNA]</scope>
    <scope>PROTEIN SEQUENCE OF 2-12</scope>
    <source>
        <strain>BALB/cJ</strain>
        <tissue>Brain</tissue>
    </source>
</reference>
<reference key="3">
    <citation type="submission" date="2000-07" db="EMBL/GenBank/DDBJ databases">
        <authorList>
            <person name="Matsukawa N."/>
        </authorList>
    </citation>
    <scope>NUCLEOTIDE SEQUENCE [MRNA]</scope>
</reference>
<reference key="4">
    <citation type="journal article" date="2001" name="J. Biol. Chem.">
        <title>The phosphatidylethanolamine-binding protein is the prototype of a novel family of serine protease inhibitors.</title>
        <authorList>
            <person name="Hengst U."/>
            <person name="Albrecht H."/>
            <person name="Hess D."/>
            <person name="Monard D."/>
        </authorList>
    </citation>
    <scope>NUCLEOTIDE SEQUENCE [MRNA]</scope>
    <scope>PROTEIN SEQUENCE OF 27-39; 63-76; 94-141 AND 158-180</scope>
    <source>
        <strain>C57BL/6J</strain>
    </source>
</reference>
<reference key="5">
    <citation type="journal article" date="2005" name="Science">
        <title>The transcriptional landscape of the mammalian genome.</title>
        <authorList>
            <person name="Carninci P."/>
            <person name="Kasukawa T."/>
            <person name="Katayama S."/>
            <person name="Gough J."/>
            <person name="Frith M.C."/>
            <person name="Maeda N."/>
            <person name="Oyama R."/>
            <person name="Ravasi T."/>
            <person name="Lenhard B."/>
            <person name="Wells C."/>
            <person name="Kodzius R."/>
            <person name="Shimokawa K."/>
            <person name="Bajic V.B."/>
            <person name="Brenner S.E."/>
            <person name="Batalov S."/>
            <person name="Forrest A.R."/>
            <person name="Zavolan M."/>
            <person name="Davis M.J."/>
            <person name="Wilming L.G."/>
            <person name="Aidinis V."/>
            <person name="Allen J.E."/>
            <person name="Ambesi-Impiombato A."/>
            <person name="Apweiler R."/>
            <person name="Aturaliya R.N."/>
            <person name="Bailey T.L."/>
            <person name="Bansal M."/>
            <person name="Baxter L."/>
            <person name="Beisel K.W."/>
            <person name="Bersano T."/>
            <person name="Bono H."/>
            <person name="Chalk A.M."/>
            <person name="Chiu K.P."/>
            <person name="Choudhary V."/>
            <person name="Christoffels A."/>
            <person name="Clutterbuck D.R."/>
            <person name="Crowe M.L."/>
            <person name="Dalla E."/>
            <person name="Dalrymple B.P."/>
            <person name="de Bono B."/>
            <person name="Della Gatta G."/>
            <person name="di Bernardo D."/>
            <person name="Down T."/>
            <person name="Engstrom P."/>
            <person name="Fagiolini M."/>
            <person name="Faulkner G."/>
            <person name="Fletcher C.F."/>
            <person name="Fukushima T."/>
            <person name="Furuno M."/>
            <person name="Futaki S."/>
            <person name="Gariboldi M."/>
            <person name="Georgii-Hemming P."/>
            <person name="Gingeras T.R."/>
            <person name="Gojobori T."/>
            <person name="Green R.E."/>
            <person name="Gustincich S."/>
            <person name="Harbers M."/>
            <person name="Hayashi Y."/>
            <person name="Hensch T.K."/>
            <person name="Hirokawa N."/>
            <person name="Hill D."/>
            <person name="Huminiecki L."/>
            <person name="Iacono M."/>
            <person name="Ikeo K."/>
            <person name="Iwama A."/>
            <person name="Ishikawa T."/>
            <person name="Jakt M."/>
            <person name="Kanapin A."/>
            <person name="Katoh M."/>
            <person name="Kawasawa Y."/>
            <person name="Kelso J."/>
            <person name="Kitamura H."/>
            <person name="Kitano H."/>
            <person name="Kollias G."/>
            <person name="Krishnan S.P."/>
            <person name="Kruger A."/>
            <person name="Kummerfeld S.K."/>
            <person name="Kurochkin I.V."/>
            <person name="Lareau L.F."/>
            <person name="Lazarevic D."/>
            <person name="Lipovich L."/>
            <person name="Liu J."/>
            <person name="Liuni S."/>
            <person name="McWilliam S."/>
            <person name="Madan Babu M."/>
            <person name="Madera M."/>
            <person name="Marchionni L."/>
            <person name="Matsuda H."/>
            <person name="Matsuzawa S."/>
            <person name="Miki H."/>
            <person name="Mignone F."/>
            <person name="Miyake S."/>
            <person name="Morris K."/>
            <person name="Mottagui-Tabar S."/>
            <person name="Mulder N."/>
            <person name="Nakano N."/>
            <person name="Nakauchi H."/>
            <person name="Ng P."/>
            <person name="Nilsson R."/>
            <person name="Nishiguchi S."/>
            <person name="Nishikawa S."/>
            <person name="Nori F."/>
            <person name="Ohara O."/>
            <person name="Okazaki Y."/>
            <person name="Orlando V."/>
            <person name="Pang K.C."/>
            <person name="Pavan W.J."/>
            <person name="Pavesi G."/>
            <person name="Pesole G."/>
            <person name="Petrovsky N."/>
            <person name="Piazza S."/>
            <person name="Reed J."/>
            <person name="Reid J.F."/>
            <person name="Ring B.Z."/>
            <person name="Ringwald M."/>
            <person name="Rost B."/>
            <person name="Ruan Y."/>
            <person name="Salzberg S.L."/>
            <person name="Sandelin A."/>
            <person name="Schneider C."/>
            <person name="Schoenbach C."/>
            <person name="Sekiguchi K."/>
            <person name="Semple C.A."/>
            <person name="Seno S."/>
            <person name="Sessa L."/>
            <person name="Sheng Y."/>
            <person name="Shibata Y."/>
            <person name="Shimada H."/>
            <person name="Shimada K."/>
            <person name="Silva D."/>
            <person name="Sinclair B."/>
            <person name="Sperling S."/>
            <person name="Stupka E."/>
            <person name="Sugiura K."/>
            <person name="Sultana R."/>
            <person name="Takenaka Y."/>
            <person name="Taki K."/>
            <person name="Tammoja K."/>
            <person name="Tan S.L."/>
            <person name="Tang S."/>
            <person name="Taylor M.S."/>
            <person name="Tegner J."/>
            <person name="Teichmann S.A."/>
            <person name="Ueda H.R."/>
            <person name="van Nimwegen E."/>
            <person name="Verardo R."/>
            <person name="Wei C.L."/>
            <person name="Yagi K."/>
            <person name="Yamanishi H."/>
            <person name="Zabarovsky E."/>
            <person name="Zhu S."/>
            <person name="Zimmer A."/>
            <person name="Hide W."/>
            <person name="Bult C."/>
            <person name="Grimmond S.M."/>
            <person name="Teasdale R.D."/>
            <person name="Liu E.T."/>
            <person name="Brusic V."/>
            <person name="Quackenbush J."/>
            <person name="Wahlestedt C."/>
            <person name="Mattick J.S."/>
            <person name="Hume D.A."/>
            <person name="Kai C."/>
            <person name="Sasaki D."/>
            <person name="Tomaru Y."/>
            <person name="Fukuda S."/>
            <person name="Kanamori-Katayama M."/>
            <person name="Suzuki M."/>
            <person name="Aoki J."/>
            <person name="Arakawa T."/>
            <person name="Iida J."/>
            <person name="Imamura K."/>
            <person name="Itoh M."/>
            <person name="Kato T."/>
            <person name="Kawaji H."/>
            <person name="Kawagashira N."/>
            <person name="Kawashima T."/>
            <person name="Kojima M."/>
            <person name="Kondo S."/>
            <person name="Konno H."/>
            <person name="Nakano K."/>
            <person name="Ninomiya N."/>
            <person name="Nishio T."/>
            <person name="Okada M."/>
            <person name="Plessy C."/>
            <person name="Shibata K."/>
            <person name="Shiraki T."/>
            <person name="Suzuki S."/>
            <person name="Tagami M."/>
            <person name="Waki K."/>
            <person name="Watahiki A."/>
            <person name="Okamura-Oho Y."/>
            <person name="Suzuki H."/>
            <person name="Kawai J."/>
            <person name="Hayashizaki Y."/>
        </authorList>
    </citation>
    <scope>NUCLEOTIDE SEQUENCE [LARGE SCALE MRNA]</scope>
    <source>
        <strain>NOD</strain>
        <tissue>Thymus</tissue>
    </source>
</reference>
<reference key="6">
    <citation type="journal article" date="2004" name="Genome Res.">
        <title>The status, quality, and expansion of the NIH full-length cDNA project: the Mammalian Gene Collection (MGC).</title>
        <authorList>
            <consortium name="The MGC Project Team"/>
        </authorList>
    </citation>
    <scope>NUCLEOTIDE SEQUENCE [LARGE SCALE MRNA]</scope>
    <source>
        <strain>C57BL/6J</strain>
        <strain>NMRI</strain>
        <tissue>Mammary gland</tissue>
        <tissue>Retina</tissue>
    </source>
</reference>
<reference key="7">
    <citation type="submission" date="2007-03" db="UniProtKB">
        <authorList>
            <person name="Lubec G."/>
            <person name="Klug S."/>
        </authorList>
    </citation>
    <scope>PROTEIN SEQUENCE OF 63-76 AND 94-119</scope>
    <scope>IDENTIFICATION BY MASS SPECTROMETRY</scope>
    <source>
        <tissue>Hippocampus</tissue>
    </source>
</reference>
<reference key="8">
    <citation type="journal article" date="2010" name="Cell">
        <title>A tissue-specific atlas of mouse protein phosphorylation and expression.</title>
        <authorList>
            <person name="Huttlin E.L."/>
            <person name="Jedrychowski M.P."/>
            <person name="Elias J.E."/>
            <person name="Goswami T."/>
            <person name="Rad R."/>
            <person name="Beausoleil S.A."/>
            <person name="Villen J."/>
            <person name="Haas W."/>
            <person name="Sowa M.E."/>
            <person name="Gygi S.P."/>
        </authorList>
    </citation>
    <scope>PHOSPHORYLATION [LARGE SCALE ANALYSIS] AT SER-51 AND SER-132</scope>
    <scope>IDENTIFICATION BY MASS SPECTROMETRY [LARGE SCALE ANALYSIS]</scope>
    <source>
        <tissue>Brain</tissue>
        <tissue>Brown adipose tissue</tissue>
        <tissue>Heart</tissue>
        <tissue>Kidney</tissue>
        <tissue>Liver</tissue>
        <tissue>Lung</tissue>
        <tissue>Pancreas</tissue>
        <tissue>Spleen</tissue>
        <tissue>Testis</tissue>
    </source>
</reference>
<protein>
    <recommendedName>
        <fullName>Phosphatidylethanolamine-binding protein 1</fullName>
        <shortName>PEBP-1</shortName>
    </recommendedName>
    <alternativeName>
        <fullName>HCNPpp</fullName>
    </alternativeName>
    <component>
        <recommendedName>
            <fullName>Hippocampal cholinergic neurostimulating peptide</fullName>
            <shortName>HCNP</shortName>
        </recommendedName>
    </component>
</protein>
<feature type="initiator methionine" description="Removed" evidence="3">
    <location>
        <position position="1"/>
    </location>
</feature>
<feature type="chain" id="PRO_0000023275" description="Phosphatidylethanolamine-binding protein 1">
    <location>
        <begin position="2"/>
        <end position="187"/>
    </location>
</feature>
<feature type="peptide" id="PRO_0000023276" description="Hippocampal cholinergic neurostimulating peptide">
    <location>
        <begin position="2"/>
        <end position="12"/>
    </location>
</feature>
<feature type="region of interest" description="Interaction with RAF1" evidence="1">
    <location>
        <begin position="93"/>
        <end position="134"/>
    </location>
</feature>
<feature type="modified residue" description="N-acetylalanine; in peptide hippocampal cholinergic neurostimulating" evidence="1">
    <location>
        <position position="2"/>
    </location>
</feature>
<feature type="modified residue" description="Phosphoserine" evidence="2">
    <location>
        <position position="6"/>
    </location>
</feature>
<feature type="modified residue" description="Phosphothreonine" evidence="2">
    <location>
        <position position="42"/>
    </location>
</feature>
<feature type="modified residue" description="Phosphoserine" evidence="5">
    <location>
        <position position="51"/>
    </location>
</feature>
<feature type="modified residue" description="Phosphoserine" evidence="2">
    <location>
        <position position="52"/>
    </location>
</feature>
<feature type="modified residue" description="Phosphoserine" evidence="2">
    <location>
        <position position="54"/>
    </location>
</feature>
<feature type="modified residue" description="Phosphoserine" evidence="2">
    <location>
        <position position="98"/>
    </location>
</feature>
<feature type="modified residue" description="Phosphoserine" evidence="5">
    <location>
        <position position="132"/>
    </location>
</feature>
<feature type="sequence conflict" description="In Ref. 1; AAB06983." evidence="4" ref="1">
    <original>G</original>
    <variation>S</variation>
    <location>
        <position position="116"/>
    </location>
</feature>
<feature type="helix" evidence="6">
    <location>
        <begin position="5"/>
        <end position="7"/>
    </location>
</feature>
<feature type="helix" evidence="6">
    <location>
        <begin position="14"/>
        <end position="16"/>
    </location>
</feature>
<feature type="strand" evidence="6">
    <location>
        <begin position="22"/>
        <end position="24"/>
    </location>
</feature>
<feature type="strand" evidence="6">
    <location>
        <begin position="26"/>
        <end position="29"/>
    </location>
</feature>
<feature type="strand" evidence="6">
    <location>
        <begin position="32"/>
        <end position="34"/>
    </location>
</feature>
<feature type="helix" evidence="6">
    <location>
        <begin position="44"/>
        <end position="46"/>
    </location>
</feature>
<feature type="strand" evidence="6">
    <location>
        <begin position="51"/>
        <end position="54"/>
    </location>
</feature>
<feature type="strand" evidence="6">
    <location>
        <begin position="62"/>
        <end position="74"/>
    </location>
</feature>
<feature type="strand" evidence="6">
    <location>
        <begin position="76"/>
        <end position="78"/>
    </location>
</feature>
<feature type="strand" evidence="6">
    <location>
        <begin position="84"/>
        <end position="93"/>
    </location>
</feature>
<feature type="helix" evidence="6">
    <location>
        <begin position="97"/>
        <end position="99"/>
    </location>
</feature>
<feature type="strand" evidence="6">
    <location>
        <begin position="100"/>
        <end position="104"/>
    </location>
</feature>
<feature type="strand" evidence="6">
    <location>
        <begin position="118"/>
        <end position="126"/>
    </location>
</feature>
<feature type="helix" evidence="6">
    <location>
        <begin position="151"/>
        <end position="157"/>
    </location>
</feature>
<feature type="strand" evidence="6">
    <location>
        <begin position="164"/>
        <end position="171"/>
    </location>
</feature>
<feature type="helix" evidence="6">
    <location>
        <begin position="177"/>
        <end position="184"/>
    </location>
</feature>